<accession>Q6DAS8</accession>
<proteinExistence type="inferred from homology"/>
<sequence length="217" mass="24913">MYLKRILITLSLITLPIVPCLSYAAESISNVGINNTGSTANLAPAAADANVSASDKHEESWWQRSKNNLSTTWNAPQSHDIYIPTITWHNRWTYDKEKTDRYNEKPWGAGYGVSRLDKDGDWHGLYIMAFKDSYNKWEPIGGYGYEKRWRPTSDQDFQLGLGFTAGFTMRDNWNYIPIPVLLPLASISYSKLSFQATYIPGTYNNGNVFFAWFRWQI</sequence>
<evidence type="ECO:0000255" key="1">
    <source>
        <dbReference type="HAMAP-Rule" id="MF_00837"/>
    </source>
</evidence>
<comment type="function">
    <text evidence="1">Transfers a fatty acid residue from the sn-1 position of a phospholipid to the N-linked hydroxyfatty acid chain on the proximal unit of lipid A or its precursors.</text>
</comment>
<comment type="catalytic activity">
    <reaction evidence="1">
        <text>a lipid A + a 1,2-diacyl-sn-glycero-3-phosphocholine = a hepta-acyl lipid A + a 2-acyl-sn-glycero-3-phosphocholine</text>
        <dbReference type="Rhea" id="RHEA:74275"/>
        <dbReference type="ChEBI" id="CHEBI:57643"/>
        <dbReference type="ChEBI" id="CHEBI:57875"/>
        <dbReference type="ChEBI" id="CHEBI:193141"/>
        <dbReference type="ChEBI" id="CHEBI:193142"/>
        <dbReference type="EC" id="2.3.1.251"/>
    </reaction>
</comment>
<comment type="catalytic activity">
    <reaction evidence="1">
        <text>a lipid IVA + a 1,2-diacyl-sn-glycero-3-phosphocholine = a lipid IVB + a 2-acyl-sn-glycero-3-phosphocholine</text>
        <dbReference type="Rhea" id="RHEA:74279"/>
        <dbReference type="ChEBI" id="CHEBI:57643"/>
        <dbReference type="ChEBI" id="CHEBI:57875"/>
        <dbReference type="ChEBI" id="CHEBI:176425"/>
        <dbReference type="ChEBI" id="CHEBI:193143"/>
        <dbReference type="EC" id="2.3.1.251"/>
    </reaction>
</comment>
<comment type="catalytic activity">
    <reaction evidence="1">
        <text>a lipid IIA + a 1,2-diacyl-sn-glycero-3-phosphocholine = a lipid IIB + a 2-acyl-sn-glycero-3-phosphocholine</text>
        <dbReference type="Rhea" id="RHEA:74283"/>
        <dbReference type="ChEBI" id="CHEBI:57643"/>
        <dbReference type="ChEBI" id="CHEBI:57875"/>
        <dbReference type="ChEBI" id="CHEBI:193144"/>
        <dbReference type="ChEBI" id="CHEBI:193145"/>
        <dbReference type="EC" id="2.3.1.251"/>
    </reaction>
</comment>
<comment type="subunit">
    <text evidence="1">Homodimer.</text>
</comment>
<comment type="subcellular location">
    <subcellularLocation>
        <location evidence="1">Cell outer membrane</location>
    </subcellularLocation>
</comment>
<comment type="similarity">
    <text evidence="1">Belongs to the lipid A palmitoyltransferase family.</text>
</comment>
<name>PAGP_PECAS</name>
<organism>
    <name type="scientific">Pectobacterium atrosepticum (strain SCRI 1043 / ATCC BAA-672)</name>
    <name type="common">Erwinia carotovora subsp. atroseptica</name>
    <dbReference type="NCBI Taxonomy" id="218491"/>
    <lineage>
        <taxon>Bacteria</taxon>
        <taxon>Pseudomonadati</taxon>
        <taxon>Pseudomonadota</taxon>
        <taxon>Gammaproteobacteria</taxon>
        <taxon>Enterobacterales</taxon>
        <taxon>Pectobacteriaceae</taxon>
        <taxon>Pectobacterium</taxon>
    </lineage>
</organism>
<protein>
    <recommendedName>
        <fullName evidence="1">Lipid A acyltransferase PagP</fullName>
        <ecNumber evidence="1">2.3.1.251</ecNumber>
    </recommendedName>
    <alternativeName>
        <fullName evidence="1">Lipid A acylation protein</fullName>
    </alternativeName>
</protein>
<reference key="1">
    <citation type="journal article" date="2004" name="Proc. Natl. Acad. Sci. U.S.A.">
        <title>Genome sequence of the enterobacterial phytopathogen Erwinia carotovora subsp. atroseptica and characterization of virulence factors.</title>
        <authorList>
            <person name="Bell K.S."/>
            <person name="Sebaihia M."/>
            <person name="Pritchard L."/>
            <person name="Holden M.T.G."/>
            <person name="Hyman L.J."/>
            <person name="Holeva M.C."/>
            <person name="Thomson N.R."/>
            <person name="Bentley S.D."/>
            <person name="Churcher L.J.C."/>
            <person name="Mungall K."/>
            <person name="Atkin R."/>
            <person name="Bason N."/>
            <person name="Brooks K."/>
            <person name="Chillingworth T."/>
            <person name="Clark K."/>
            <person name="Doggett J."/>
            <person name="Fraser A."/>
            <person name="Hance Z."/>
            <person name="Hauser H."/>
            <person name="Jagels K."/>
            <person name="Moule S."/>
            <person name="Norbertczak H."/>
            <person name="Ormond D."/>
            <person name="Price C."/>
            <person name="Quail M.A."/>
            <person name="Sanders M."/>
            <person name="Walker D."/>
            <person name="Whitehead S."/>
            <person name="Salmond G.P.C."/>
            <person name="Birch P.R.J."/>
            <person name="Parkhill J."/>
            <person name="Toth I.K."/>
        </authorList>
    </citation>
    <scope>NUCLEOTIDE SEQUENCE [LARGE SCALE GENOMIC DNA]</scope>
    <source>
        <strain>SCRI 1043 / ATCC BAA-672</strain>
    </source>
</reference>
<dbReference type="EC" id="2.3.1.251" evidence="1"/>
<dbReference type="EMBL" id="BX950851">
    <property type="protein sequence ID" value="CAG73094.1"/>
    <property type="molecule type" value="Genomic_DNA"/>
</dbReference>
<dbReference type="RefSeq" id="WP_011091814.1">
    <property type="nucleotide sequence ID" value="NC_004547.2"/>
</dbReference>
<dbReference type="SMR" id="Q6DAS8"/>
<dbReference type="STRING" id="218491.ECA0175"/>
<dbReference type="KEGG" id="eca:ECA0175"/>
<dbReference type="PATRIC" id="fig|218491.5.peg.175"/>
<dbReference type="eggNOG" id="ENOG502Z7SY">
    <property type="taxonomic scope" value="Bacteria"/>
</dbReference>
<dbReference type="HOGENOM" id="CLU_104099_0_0_6"/>
<dbReference type="OrthoDB" id="9156803at2"/>
<dbReference type="Proteomes" id="UP000007966">
    <property type="component" value="Chromosome"/>
</dbReference>
<dbReference type="GO" id="GO:0009279">
    <property type="term" value="C:cell outer membrane"/>
    <property type="evidence" value="ECO:0007669"/>
    <property type="project" value="UniProtKB-SubCell"/>
</dbReference>
<dbReference type="GO" id="GO:0016746">
    <property type="term" value="F:acyltransferase activity"/>
    <property type="evidence" value="ECO:0007669"/>
    <property type="project" value="UniProtKB-UniRule"/>
</dbReference>
<dbReference type="GO" id="GO:0009245">
    <property type="term" value="P:lipid A biosynthetic process"/>
    <property type="evidence" value="ECO:0007669"/>
    <property type="project" value="UniProtKB-UniRule"/>
</dbReference>
<dbReference type="FunFam" id="2.40.160.20:FF:000002">
    <property type="entry name" value="Lipid A palmitoyltransferase PagP"/>
    <property type="match status" value="1"/>
</dbReference>
<dbReference type="Gene3D" id="2.40.160.20">
    <property type="match status" value="1"/>
</dbReference>
<dbReference type="HAMAP" id="MF_00837">
    <property type="entry name" value="PagP_transferase"/>
    <property type="match status" value="1"/>
</dbReference>
<dbReference type="InterPro" id="IPR009746">
    <property type="entry name" value="LipidA_acyl_PagP"/>
</dbReference>
<dbReference type="InterPro" id="IPR011250">
    <property type="entry name" value="OMP/PagP_b-brl"/>
</dbReference>
<dbReference type="NCBIfam" id="NF008271">
    <property type="entry name" value="PRK11045.1"/>
    <property type="match status" value="1"/>
</dbReference>
<dbReference type="Pfam" id="PF07017">
    <property type="entry name" value="PagP"/>
    <property type="match status" value="1"/>
</dbReference>
<dbReference type="SUPFAM" id="SSF56925">
    <property type="entry name" value="OMPA-like"/>
    <property type="match status" value="1"/>
</dbReference>
<gene>
    <name evidence="1" type="primary">pagP</name>
    <name type="ordered locus">ECA0175</name>
</gene>
<feature type="signal peptide" evidence="1">
    <location>
        <begin position="1"/>
        <end position="24"/>
    </location>
</feature>
<feature type="chain" id="PRO_0000414444" description="Lipid A acyltransferase PagP">
    <location>
        <begin position="25"/>
        <end position="217"/>
    </location>
</feature>
<feature type="active site" evidence="1">
    <location>
        <position position="89"/>
    </location>
</feature>
<feature type="active site" evidence="1">
    <location>
        <position position="132"/>
    </location>
</feature>
<feature type="active site" evidence="1">
    <location>
        <position position="133"/>
    </location>
</feature>
<feature type="site" description="Role in lipopolysaccharide recognition" evidence="1">
    <location>
        <position position="98"/>
    </location>
</feature>
<feature type="site" description="Role in the phospholipid gating" evidence="1">
    <location>
        <position position="203"/>
    </location>
</feature>
<keyword id="KW-0012">Acyltransferase</keyword>
<keyword id="KW-0998">Cell outer membrane</keyword>
<keyword id="KW-0472">Membrane</keyword>
<keyword id="KW-1185">Reference proteome</keyword>
<keyword id="KW-0732">Signal</keyword>
<keyword id="KW-0808">Transferase</keyword>